<feature type="chain" id="PRO_0000286416" description="Protein HIR1">
    <location>
        <begin position="1"/>
        <end position="1017"/>
    </location>
</feature>
<feature type="repeat" description="WD 1">
    <location>
        <begin position="18"/>
        <end position="57"/>
    </location>
</feature>
<feature type="repeat" description="WD 2">
    <location>
        <begin position="72"/>
        <end position="111"/>
    </location>
</feature>
<feature type="repeat" description="WD 3">
    <location>
        <begin position="131"/>
        <end position="170"/>
    </location>
</feature>
<feature type="repeat" description="WD 4">
    <location>
        <begin position="173"/>
        <end position="212"/>
    </location>
</feature>
<feature type="repeat" description="WD 5">
    <location>
        <begin position="221"/>
        <end position="261"/>
    </location>
</feature>
<feature type="repeat" description="WD 6">
    <location>
        <begin position="267"/>
        <end position="316"/>
    </location>
</feature>
<feature type="repeat" description="WD 7">
    <location>
        <begin position="320"/>
        <end position="359"/>
    </location>
</feature>
<feature type="region of interest" description="Disordered" evidence="2">
    <location>
        <begin position="387"/>
        <end position="438"/>
    </location>
</feature>
<feature type="region of interest" description="Disordered" evidence="2">
    <location>
        <begin position="591"/>
        <end position="638"/>
    </location>
</feature>
<feature type="region of interest" description="Disordered" evidence="2">
    <location>
        <begin position="880"/>
        <end position="899"/>
    </location>
</feature>
<feature type="compositionally biased region" description="Acidic residues" evidence="2">
    <location>
        <begin position="598"/>
        <end position="608"/>
    </location>
</feature>
<feature type="compositionally biased region" description="Basic and acidic residues" evidence="2">
    <location>
        <begin position="618"/>
        <end position="638"/>
    </location>
</feature>
<accession>Q4P4R3</accession>
<accession>A0A0D1BZ49</accession>
<organism>
    <name type="scientific">Mycosarcoma maydis</name>
    <name type="common">Corn smut fungus</name>
    <name type="synonym">Ustilago maydis</name>
    <dbReference type="NCBI Taxonomy" id="5270"/>
    <lineage>
        <taxon>Eukaryota</taxon>
        <taxon>Fungi</taxon>
        <taxon>Dikarya</taxon>
        <taxon>Basidiomycota</taxon>
        <taxon>Ustilaginomycotina</taxon>
        <taxon>Ustilaginomycetes</taxon>
        <taxon>Ustilaginales</taxon>
        <taxon>Ustilaginaceae</taxon>
        <taxon>Mycosarcoma</taxon>
    </lineage>
</organism>
<sequence>MSIILPDWVAHHNDDKKGKLSTIFSVAVHPDSSRLATAGLDTKIRIWATATILNPRAENNSNSHRLLSTLSRHTGSVLVVRWANSGRFLASGSDDTVALIWDLDPSGMGGGSFGSSEVNIESWRPYRRLAGHESDVVDLAWADDDEFIATVGLDSKVIVWSGTHFDRLRIIDGHQGFVKGVVFDPLGQYLATASDDKTVKVWRTSDWGLERSITDPFLTSPSTAFFRRPSWSPDGSLLLCANAMSGPVFVASVVKRSSWSSDIYFVGHENAVVVTAFSPKIFVGFDGGTHSCVVALGSLDQSVSIWVTGLEQPVLVARDVFERQVMDLSWSADGYTLYACSSDGTVAVFHLSPELISDALSAEKLEQSRAKHGVKRVRNVAAATNGALPIGTSDRPNMLQPRKAGQSQAARASVPPVPIAGSVPPVRPIASRTERLHQTITITKDGKRRIRPTLIGDDLEPSQAVSHHHAYQPAPTSHALMPSIQQHQLPAMREAIGGTTVDGFGARPGVNGIHAGMTNSVSDGTAAAVVEAVLAAQRSNPAAMTTPMAAASSMMPYVPIGLPFGIMPEGASPEDMMQFWTEFQQRFMRGKKRKAEDAEAGSDSDDIEPIGKLQKGKTRADIGRTLGSEHPRDPPGPKKVLREALTGASGIVENGVRKGVHLAVPETLSIYRRDEDGLSIEIRNFDESRPTEIARLDPSDKDRVLWLDFSPTAATLATATSFFSAVALEDSTVLIYSSRGGRIGNLLLDSACYRLESNGVVLMAVTVAGLMYRWNIRADHEIHRPVSVLNLLGDPENLFSITVHANGAPIVILQSEKAYTFDDKKLGWVCISDGWWAEHSEAWDGRTRSRGSEVSVRDPVRAIEAEINTMYVRRVHGDNQVGAQEESDDDQTPPVEMSVPEDKKSDFVIAVTLRHLEARILAATILDSANEYKNHLIAYAKRIAEEGIKNQAEDLIKSLIGPIYYKPEKNQDAAWQPTILGFDKRQLCGQVLQILARPRNLTSLVQPYQEILANMKA</sequence>
<comment type="function">
    <text evidence="1">Required for replication-independent chromatin assembly and for the periodic repression of histone gene transcription during the cell cycle.</text>
</comment>
<comment type="subcellular location">
    <subcellularLocation>
        <location evidence="1">Nucleus</location>
    </subcellularLocation>
</comment>
<comment type="similarity">
    <text evidence="3">Belongs to the WD repeat HIR1 family.</text>
</comment>
<dbReference type="EMBL" id="CM003154">
    <property type="protein sequence ID" value="KIS67027.1"/>
    <property type="molecule type" value="Genomic_DNA"/>
</dbReference>
<dbReference type="RefSeq" id="XP_011391225.1">
    <property type="nucleotide sequence ID" value="XM_011392923.1"/>
</dbReference>
<dbReference type="SMR" id="Q4P4R3"/>
<dbReference type="FunCoup" id="Q4P4R3">
    <property type="interactions" value="343"/>
</dbReference>
<dbReference type="STRING" id="237631.Q4P4R3"/>
<dbReference type="EnsemblFungi" id="KIS67027">
    <property type="protein sequence ID" value="KIS67027"/>
    <property type="gene ID" value="UMAG_04900"/>
</dbReference>
<dbReference type="GeneID" id="23564936"/>
<dbReference type="KEGG" id="uma:UMAG_04900"/>
<dbReference type="VEuPathDB" id="FungiDB:UMAG_04900"/>
<dbReference type="eggNOG" id="KOG0973">
    <property type="taxonomic scope" value="Eukaryota"/>
</dbReference>
<dbReference type="HOGENOM" id="CLU_004372_3_0_1"/>
<dbReference type="InParanoid" id="Q4P4R3"/>
<dbReference type="OMA" id="RGSWDGD"/>
<dbReference type="OrthoDB" id="1741719at2759"/>
<dbReference type="Proteomes" id="UP000000561">
    <property type="component" value="Chromosome 15"/>
</dbReference>
<dbReference type="GO" id="GO:0000785">
    <property type="term" value="C:chromatin"/>
    <property type="evidence" value="ECO:0000318"/>
    <property type="project" value="GO_Central"/>
</dbReference>
<dbReference type="GO" id="GO:0000417">
    <property type="term" value="C:HIR complex"/>
    <property type="evidence" value="ECO:0000318"/>
    <property type="project" value="GO_Central"/>
</dbReference>
<dbReference type="GO" id="GO:0005634">
    <property type="term" value="C:nucleus"/>
    <property type="evidence" value="ECO:0007669"/>
    <property type="project" value="UniProtKB-SubCell"/>
</dbReference>
<dbReference type="GO" id="GO:0006338">
    <property type="term" value="P:chromatin remodeling"/>
    <property type="evidence" value="ECO:0000318"/>
    <property type="project" value="GO_Central"/>
</dbReference>
<dbReference type="GO" id="GO:0006351">
    <property type="term" value="P:DNA-templated transcription"/>
    <property type="evidence" value="ECO:0007669"/>
    <property type="project" value="InterPro"/>
</dbReference>
<dbReference type="GO" id="GO:0006355">
    <property type="term" value="P:regulation of DNA-templated transcription"/>
    <property type="evidence" value="ECO:0007669"/>
    <property type="project" value="InterPro"/>
</dbReference>
<dbReference type="CDD" id="cd00200">
    <property type="entry name" value="WD40"/>
    <property type="match status" value="1"/>
</dbReference>
<dbReference type="FunFam" id="2.130.10.10:FF:000701">
    <property type="entry name" value="Protein HIR"/>
    <property type="match status" value="1"/>
</dbReference>
<dbReference type="FunFam" id="2.130.10.10:FF:000921">
    <property type="entry name" value="Protein HIR"/>
    <property type="match status" value="1"/>
</dbReference>
<dbReference type="Gene3D" id="2.130.10.10">
    <property type="entry name" value="YVTN repeat-like/Quinoprotein amine dehydrogenase"/>
    <property type="match status" value="2"/>
</dbReference>
<dbReference type="InterPro" id="IPR055410">
    <property type="entry name" value="CAF1B_HIR1_beta-prop"/>
</dbReference>
<dbReference type="InterPro" id="IPR031120">
    <property type="entry name" value="HIR1-like"/>
</dbReference>
<dbReference type="InterPro" id="IPR011494">
    <property type="entry name" value="HIRA-like_C"/>
</dbReference>
<dbReference type="InterPro" id="IPR019015">
    <property type="entry name" value="HIRA_B_motif"/>
</dbReference>
<dbReference type="InterPro" id="IPR015943">
    <property type="entry name" value="WD40/YVTN_repeat-like_dom_sf"/>
</dbReference>
<dbReference type="InterPro" id="IPR019775">
    <property type="entry name" value="WD40_repeat_CS"/>
</dbReference>
<dbReference type="InterPro" id="IPR036322">
    <property type="entry name" value="WD40_repeat_dom_sf"/>
</dbReference>
<dbReference type="InterPro" id="IPR001680">
    <property type="entry name" value="WD40_rpt"/>
</dbReference>
<dbReference type="PANTHER" id="PTHR13831">
    <property type="entry name" value="MEMBER OF THE HIR1 FAMILY OF WD-REPEAT PROTEINS"/>
    <property type="match status" value="1"/>
</dbReference>
<dbReference type="PANTHER" id="PTHR13831:SF0">
    <property type="entry name" value="PROTEIN HIRA"/>
    <property type="match status" value="1"/>
</dbReference>
<dbReference type="Pfam" id="PF24105">
    <property type="entry name" value="Beta-prop_CAF1B_HIR1"/>
    <property type="match status" value="1"/>
</dbReference>
<dbReference type="Pfam" id="PF07569">
    <property type="entry name" value="Hira"/>
    <property type="match status" value="1"/>
</dbReference>
<dbReference type="Pfam" id="PF09453">
    <property type="entry name" value="HIRA_B"/>
    <property type="match status" value="1"/>
</dbReference>
<dbReference type="SMART" id="SM00320">
    <property type="entry name" value="WD40"/>
    <property type="match status" value="7"/>
</dbReference>
<dbReference type="SUPFAM" id="SSF50978">
    <property type="entry name" value="WD40 repeat-like"/>
    <property type="match status" value="1"/>
</dbReference>
<dbReference type="PROSITE" id="PS00678">
    <property type="entry name" value="WD_REPEATS_1"/>
    <property type="match status" value="1"/>
</dbReference>
<dbReference type="PROSITE" id="PS50082">
    <property type="entry name" value="WD_REPEATS_2"/>
    <property type="match status" value="4"/>
</dbReference>
<dbReference type="PROSITE" id="PS50294">
    <property type="entry name" value="WD_REPEATS_REGION"/>
    <property type="match status" value="1"/>
</dbReference>
<keyword id="KW-0156">Chromatin regulator</keyword>
<keyword id="KW-0539">Nucleus</keyword>
<keyword id="KW-1185">Reference proteome</keyword>
<keyword id="KW-0677">Repeat</keyword>
<keyword id="KW-0678">Repressor</keyword>
<keyword id="KW-0804">Transcription</keyword>
<keyword id="KW-0805">Transcription regulation</keyword>
<keyword id="KW-0853">WD repeat</keyword>
<gene>
    <name type="primary">HIR1</name>
    <name type="ORF">UMAG_04900</name>
</gene>
<reference key="1">
    <citation type="journal article" date="2006" name="Nature">
        <title>Insights from the genome of the biotrophic fungal plant pathogen Ustilago maydis.</title>
        <authorList>
            <person name="Kaemper J."/>
            <person name="Kahmann R."/>
            <person name="Boelker M."/>
            <person name="Ma L.-J."/>
            <person name="Brefort T."/>
            <person name="Saville B.J."/>
            <person name="Banuett F."/>
            <person name="Kronstad J.W."/>
            <person name="Gold S.E."/>
            <person name="Mueller O."/>
            <person name="Perlin M.H."/>
            <person name="Woesten H.A.B."/>
            <person name="de Vries R."/>
            <person name="Ruiz-Herrera J."/>
            <person name="Reynaga-Pena C.G."/>
            <person name="Snetselaar K."/>
            <person name="McCann M."/>
            <person name="Perez-Martin J."/>
            <person name="Feldbruegge M."/>
            <person name="Basse C.W."/>
            <person name="Steinberg G."/>
            <person name="Ibeas J.I."/>
            <person name="Holloman W."/>
            <person name="Guzman P."/>
            <person name="Farman M.L."/>
            <person name="Stajich J.E."/>
            <person name="Sentandreu R."/>
            <person name="Gonzalez-Prieto J.M."/>
            <person name="Kennell J.C."/>
            <person name="Molina L."/>
            <person name="Schirawski J."/>
            <person name="Mendoza-Mendoza A."/>
            <person name="Greilinger D."/>
            <person name="Muench K."/>
            <person name="Roessel N."/>
            <person name="Scherer M."/>
            <person name="Vranes M."/>
            <person name="Ladendorf O."/>
            <person name="Vincon V."/>
            <person name="Fuchs U."/>
            <person name="Sandrock B."/>
            <person name="Meng S."/>
            <person name="Ho E.C.H."/>
            <person name="Cahill M.J."/>
            <person name="Boyce K.J."/>
            <person name="Klose J."/>
            <person name="Klosterman S.J."/>
            <person name="Deelstra H.J."/>
            <person name="Ortiz-Castellanos L."/>
            <person name="Li W."/>
            <person name="Sanchez-Alonso P."/>
            <person name="Schreier P.H."/>
            <person name="Haeuser-Hahn I."/>
            <person name="Vaupel M."/>
            <person name="Koopmann E."/>
            <person name="Friedrich G."/>
            <person name="Voss H."/>
            <person name="Schlueter T."/>
            <person name="Margolis J."/>
            <person name="Platt D."/>
            <person name="Swimmer C."/>
            <person name="Gnirke A."/>
            <person name="Chen F."/>
            <person name="Vysotskaia V."/>
            <person name="Mannhaupt G."/>
            <person name="Gueldener U."/>
            <person name="Muensterkoetter M."/>
            <person name="Haase D."/>
            <person name="Oesterheld M."/>
            <person name="Mewes H.-W."/>
            <person name="Mauceli E.W."/>
            <person name="DeCaprio D."/>
            <person name="Wade C.M."/>
            <person name="Butler J."/>
            <person name="Young S.K."/>
            <person name="Jaffe D.B."/>
            <person name="Calvo S.E."/>
            <person name="Nusbaum C."/>
            <person name="Galagan J.E."/>
            <person name="Birren B.W."/>
        </authorList>
    </citation>
    <scope>NUCLEOTIDE SEQUENCE [LARGE SCALE GENOMIC DNA]</scope>
    <source>
        <strain>DSM 14603 / FGSC 9021 / UM521</strain>
    </source>
</reference>
<reference key="2">
    <citation type="submission" date="2014-09" db="EMBL/GenBank/DDBJ databases">
        <authorList>
            <person name="Gueldener U."/>
            <person name="Muensterkoetter M."/>
            <person name="Walter M.C."/>
            <person name="Mannhaupt G."/>
            <person name="Kahmann R."/>
        </authorList>
    </citation>
    <scope>GENOME REANNOTATION</scope>
    <source>
        <strain>DSM 14603 / FGSC 9021 / UM521</strain>
    </source>
</reference>
<protein>
    <recommendedName>
        <fullName>Protein HIR1</fullName>
    </recommendedName>
</protein>
<proteinExistence type="inferred from homology"/>
<name>HIR1_MYCMD</name>
<evidence type="ECO:0000250" key="1"/>
<evidence type="ECO:0000256" key="2">
    <source>
        <dbReference type="SAM" id="MobiDB-lite"/>
    </source>
</evidence>
<evidence type="ECO:0000305" key="3"/>